<protein>
    <recommendedName>
        <fullName>Tryptophan 5-hydroxylase 2</fullName>
        <ecNumber evidence="11">1.14.16.4</ecNumber>
    </recommendedName>
    <alternativeName>
        <fullName>Neuronal tryptophan hydroxylase</fullName>
    </alternativeName>
    <alternativeName>
        <fullName>Tryptophan 5-monooxygenase 2</fullName>
    </alternativeName>
</protein>
<accession>Q8IWU9</accession>
<accession>A6NGA4</accession>
<accession>Q14CB0</accession>
<organism>
    <name type="scientific">Homo sapiens</name>
    <name type="common">Human</name>
    <dbReference type="NCBI Taxonomy" id="9606"/>
    <lineage>
        <taxon>Eukaryota</taxon>
        <taxon>Metazoa</taxon>
        <taxon>Chordata</taxon>
        <taxon>Craniata</taxon>
        <taxon>Vertebrata</taxon>
        <taxon>Euteleostomi</taxon>
        <taxon>Mammalia</taxon>
        <taxon>Eutheria</taxon>
        <taxon>Euarchontoglires</taxon>
        <taxon>Primates</taxon>
        <taxon>Haplorrhini</taxon>
        <taxon>Catarrhini</taxon>
        <taxon>Hominidae</taxon>
        <taxon>Homo</taxon>
    </lineage>
</organism>
<name>TPH2_HUMAN</name>
<evidence type="ECO:0000250" key="1"/>
<evidence type="ECO:0000250" key="2">
    <source>
        <dbReference type="UniProtKB" id="Q8CGU9"/>
    </source>
</evidence>
<evidence type="ECO:0000250" key="3">
    <source>
        <dbReference type="UniProtKB" id="Q8CGV2"/>
    </source>
</evidence>
<evidence type="ECO:0000255" key="4">
    <source>
        <dbReference type="PROSITE-ProRule" id="PRU01007"/>
    </source>
</evidence>
<evidence type="ECO:0000256" key="5">
    <source>
        <dbReference type="SAM" id="MobiDB-lite"/>
    </source>
</evidence>
<evidence type="ECO:0000269" key="6">
    <source>
    </source>
</evidence>
<evidence type="ECO:0000269" key="7">
    <source>
    </source>
</evidence>
<evidence type="ECO:0000269" key="8">
    <source>
    </source>
</evidence>
<evidence type="ECO:0000269" key="9">
    <source>
    </source>
</evidence>
<evidence type="ECO:0000269" key="10">
    <source>
    </source>
</evidence>
<evidence type="ECO:0000269" key="11">
    <source>
    </source>
</evidence>
<evidence type="ECO:0000305" key="12"/>
<evidence type="ECO:0007829" key="13">
    <source>
        <dbReference type="PDB" id="4V06"/>
    </source>
</evidence>
<evidence type="ECO:0007829" key="14">
    <source>
        <dbReference type="PDB" id="7QRI"/>
    </source>
</evidence>
<evidence type="ECO:0007829" key="15">
    <source>
        <dbReference type="PDB" id="7WIY"/>
    </source>
</evidence>
<feature type="chain" id="PRO_0000205574" description="Tryptophan 5-hydroxylase 2">
    <location>
        <begin position="1"/>
        <end position="490"/>
    </location>
</feature>
<feature type="domain" description="ACT" evidence="4">
    <location>
        <begin position="65"/>
        <end position="140"/>
    </location>
</feature>
<feature type="region of interest" description="Disordered" evidence="5">
    <location>
        <begin position="31"/>
        <end position="58"/>
    </location>
</feature>
<feature type="compositionally biased region" description="Polar residues" evidence="5">
    <location>
        <begin position="31"/>
        <end position="42"/>
    </location>
</feature>
<feature type="compositionally biased region" description="Basic and acidic residues" evidence="5">
    <location>
        <begin position="43"/>
        <end position="58"/>
    </location>
</feature>
<feature type="binding site" evidence="1">
    <location>
        <position position="318"/>
    </location>
    <ligand>
        <name>Fe cation</name>
        <dbReference type="ChEBI" id="CHEBI:24875"/>
    </ligand>
</feature>
<feature type="binding site" evidence="1">
    <location>
        <position position="323"/>
    </location>
    <ligand>
        <name>Fe cation</name>
        <dbReference type="ChEBI" id="CHEBI:24875"/>
    </ligand>
</feature>
<feature type="binding site" evidence="1">
    <location>
        <position position="363"/>
    </location>
    <ligand>
        <name>Fe cation</name>
        <dbReference type="ChEBI" id="CHEBI:24875"/>
    </ligand>
</feature>
<feature type="modified residue" description="Phosphoserine" evidence="2">
    <location>
        <position position="19"/>
    </location>
</feature>
<feature type="splice variant" id="VSP_040971" description="In isoform b." evidence="12">
    <original>E</original>
    <variation>GKE</variation>
    <location>
        <position position="147"/>
    </location>
</feature>
<feature type="sequence variant" id="VAR_058938" description="Does not affect catalytic activity; dbSNP:rs199775778." evidence="9">
    <original>L</original>
    <variation>P</variation>
    <location>
        <position position="36"/>
    </location>
</feature>
<feature type="sequence variant" id="VAR_058939" description="Does not affect catalytic activity; dbSNP:rs34115267." evidence="9">
    <original>L</original>
    <variation>V</variation>
    <location>
        <position position="36"/>
    </location>
</feature>
<feature type="sequence variant" id="VAR_058940" description="Does not affect catalytic activity; dbSNP:rs78162420." evidence="9">
    <original>S</original>
    <variation>Y</variation>
    <location>
        <position position="41"/>
    </location>
</feature>
<feature type="sequence variant" id="VAR_058941" description="Does not affect catalytic activity; dbSNP:rs75558144." evidence="9">
    <original>R</original>
    <variation>C</variation>
    <location>
        <position position="55"/>
    </location>
</feature>
<feature type="sequence variant" id="VAR_046136" description="Risk factor for bipolar affective disorder; may results in moderately decreased function in serotonin synthesis; decreases solubility; decreases thermal stability; catalytic activity as the wild type; dbSNP:rs17110563." evidence="7 9">
    <original>P</original>
    <variation>S</variation>
    <location>
        <position position="206"/>
    </location>
</feature>
<feature type="sequence variant" id="VAR_058942" description="In ADHD7; has severely reduced solubility; is completely inactive; loss of function may lead to a reduced serotonin synthesis; dbSNP:rs120074176." evidence="8 9">
    <original>R</original>
    <variation>W</variation>
    <location>
        <position position="303"/>
    </location>
</feature>
<feature type="sequence variant" id="VAR_088473" description="Loss of activity; dbSNP:rs2887147." evidence="11">
    <original>A</original>
    <variation>E</variation>
    <location>
        <position position="328"/>
    </location>
</feature>
<feature type="sequence variant" id="VAR_058943" description="Decreased catalytic activity; enhanced substrate inhibition by tryptophan; decreased solubility; dbSNP:rs2887147." evidence="9 11">
    <original>A</original>
    <variation>V</variation>
    <location>
        <position position="328"/>
    </location>
</feature>
<feature type="sequence variant" id="VAR_065019" description="In RNA edited version.">
    <original>R</original>
    <variation>G</variation>
    <location>
        <position position="433"/>
    </location>
</feature>
<feature type="sequence variant" id="VAR_026749" description="Linked with susceptibility to major depressive disorder; may be due to a rare RNA editing event; 80% loss of function; decreases solubility; decreases thermal stability; reduces catalytic activity; dbSNP:rs120074175." evidence="6 7 9">
    <original>R</original>
    <variation>H</variation>
    <location>
        <position position="441"/>
    </location>
</feature>
<feature type="sequence variant" id="VAR_065020" description="In RNA edited version; dbSNP:rs1317926854.">
    <original>Q</original>
    <variation>R</variation>
    <location>
        <position position="468"/>
    </location>
</feature>
<feature type="sequence variant" id="VAR_058944" description="Decreased solubility; dbSNP:rs7488262." evidence="9">
    <original>D</original>
    <variation>E</variation>
    <location>
        <position position="479"/>
    </location>
</feature>
<feature type="sequence conflict" description="In Ref. 3; AAI14500." evidence="12" ref="3">
    <original>S</original>
    <variation>N</variation>
    <location>
        <position position="53"/>
    </location>
</feature>
<feature type="strand" evidence="14">
    <location>
        <begin position="64"/>
        <end position="72"/>
    </location>
</feature>
<feature type="helix" evidence="14">
    <location>
        <begin position="76"/>
        <end position="86"/>
    </location>
</feature>
<feature type="strand" evidence="14">
    <location>
        <begin position="91"/>
        <end position="97"/>
    </location>
</feature>
<feature type="strand" evidence="14">
    <location>
        <begin position="104"/>
        <end position="112"/>
    </location>
</feature>
<feature type="helix" evidence="14">
    <location>
        <begin position="116"/>
        <end position="129"/>
    </location>
</feature>
<feature type="helix" evidence="13">
    <location>
        <begin position="158"/>
        <end position="161"/>
    </location>
</feature>
<feature type="helix" evidence="13">
    <location>
        <begin position="162"/>
        <end position="165"/>
    </location>
</feature>
<feature type="strand" evidence="13">
    <location>
        <begin position="168"/>
        <end position="171"/>
    </location>
</feature>
<feature type="strand" evidence="15">
    <location>
        <begin position="172"/>
        <end position="174"/>
    </location>
</feature>
<feature type="turn" evidence="13">
    <location>
        <begin position="180"/>
        <end position="183"/>
    </location>
</feature>
<feature type="helix" evidence="13">
    <location>
        <begin position="185"/>
        <end position="199"/>
    </location>
</feature>
<feature type="helix" evidence="13">
    <location>
        <begin position="214"/>
        <end position="228"/>
    </location>
</feature>
<feature type="helix" evidence="13">
    <location>
        <begin position="231"/>
        <end position="234"/>
    </location>
</feature>
<feature type="helix" evidence="13">
    <location>
        <begin position="237"/>
        <end position="249"/>
    </location>
</feature>
<feature type="helix" evidence="13">
    <location>
        <begin position="260"/>
        <end position="270"/>
    </location>
</feature>
<feature type="strand" evidence="13">
    <location>
        <begin position="274"/>
        <end position="277"/>
    </location>
</feature>
<feature type="strand" evidence="13">
    <location>
        <begin position="279"/>
        <end position="282"/>
    </location>
</feature>
<feature type="helix" evidence="13">
    <location>
        <begin position="284"/>
        <end position="291"/>
    </location>
</feature>
<feature type="turn" evidence="13">
    <location>
        <begin position="292"/>
        <end position="294"/>
    </location>
</feature>
<feature type="strand" evidence="13">
    <location>
        <begin position="295"/>
        <end position="298"/>
    </location>
</feature>
<feature type="helix" evidence="13">
    <location>
        <begin position="316"/>
        <end position="322"/>
    </location>
</feature>
<feature type="helix" evidence="13">
    <location>
        <begin position="324"/>
        <end position="327"/>
    </location>
</feature>
<feature type="helix" evidence="13">
    <location>
        <begin position="330"/>
        <end position="343"/>
    </location>
</feature>
<feature type="helix" evidence="13">
    <location>
        <begin position="348"/>
        <end position="359"/>
    </location>
</feature>
<feature type="turn" evidence="13">
    <location>
        <begin position="360"/>
        <end position="364"/>
    </location>
</feature>
<feature type="strand" evidence="13">
    <location>
        <begin position="365"/>
        <end position="369"/>
    </location>
</feature>
<feature type="strand" evidence="13">
    <location>
        <begin position="372"/>
        <end position="375"/>
    </location>
</feature>
<feature type="helix" evidence="13">
    <location>
        <begin position="378"/>
        <end position="382"/>
    </location>
</feature>
<feature type="helix" evidence="13">
    <location>
        <begin position="384"/>
        <end position="390"/>
    </location>
</feature>
<feature type="strand" evidence="13">
    <location>
        <begin position="392"/>
        <end position="395"/>
    </location>
</feature>
<feature type="strand" evidence="13">
    <location>
        <begin position="397"/>
        <end position="399"/>
    </location>
</feature>
<feature type="helix" evidence="13">
    <location>
        <begin position="402"/>
        <end position="405"/>
    </location>
</feature>
<feature type="strand" evidence="13">
    <location>
        <begin position="412"/>
        <end position="414"/>
    </location>
</feature>
<feature type="strand" evidence="13">
    <location>
        <begin position="419"/>
        <end position="423"/>
    </location>
</feature>
<feature type="helix" evidence="13">
    <location>
        <begin position="425"/>
        <end position="435"/>
    </location>
</feature>
<feature type="turn" evidence="13">
    <location>
        <begin position="436"/>
        <end position="438"/>
    </location>
</feature>
<feature type="strand" evidence="13">
    <location>
        <begin position="442"/>
        <end position="448"/>
    </location>
</feature>
<feature type="turn" evidence="13">
    <location>
        <begin position="449"/>
        <end position="452"/>
    </location>
</feature>
<feature type="strand" evidence="13">
    <location>
        <begin position="453"/>
        <end position="457"/>
    </location>
</feature>
<feature type="helix" evidence="13">
    <location>
        <begin position="460"/>
        <end position="488"/>
    </location>
</feature>
<reference key="1">
    <citation type="journal article" date="2003" name="Science">
        <title>Synthesis of serotonin by a second tryptophan hydroxylase isoform.</title>
        <authorList>
            <person name="Walther D.J."/>
            <person name="Peter J.-U."/>
            <person name="Bashammakh S."/>
            <person name="Hortnagl H."/>
            <person name="Voits M."/>
            <person name="Fink H."/>
            <person name="Bader M."/>
        </authorList>
    </citation>
    <scope>NUCLEOTIDE SEQUENCE [MRNA] (ISOFORM A)</scope>
</reference>
<reference key="2">
    <citation type="journal article" date="2006" name="Nature">
        <title>The finished DNA sequence of human chromosome 12.</title>
        <authorList>
            <person name="Scherer S.E."/>
            <person name="Muzny D.M."/>
            <person name="Buhay C.J."/>
            <person name="Chen R."/>
            <person name="Cree A."/>
            <person name="Ding Y."/>
            <person name="Dugan-Rocha S."/>
            <person name="Gill R."/>
            <person name="Gunaratne P."/>
            <person name="Harris R.A."/>
            <person name="Hawes A.C."/>
            <person name="Hernandez J."/>
            <person name="Hodgson A.V."/>
            <person name="Hume J."/>
            <person name="Jackson A."/>
            <person name="Khan Z.M."/>
            <person name="Kovar-Smith C."/>
            <person name="Lewis L.R."/>
            <person name="Lozado R.J."/>
            <person name="Metzker M.L."/>
            <person name="Milosavljevic A."/>
            <person name="Miner G.R."/>
            <person name="Montgomery K.T."/>
            <person name="Morgan M.B."/>
            <person name="Nazareth L.V."/>
            <person name="Scott G."/>
            <person name="Sodergren E."/>
            <person name="Song X.-Z."/>
            <person name="Steffen D."/>
            <person name="Lovering R.C."/>
            <person name="Wheeler D.A."/>
            <person name="Worley K.C."/>
            <person name="Yuan Y."/>
            <person name="Zhang Z."/>
            <person name="Adams C.Q."/>
            <person name="Ansari-Lari M.A."/>
            <person name="Ayele M."/>
            <person name="Brown M.J."/>
            <person name="Chen G."/>
            <person name="Chen Z."/>
            <person name="Clerc-Blankenburg K.P."/>
            <person name="Davis C."/>
            <person name="Delgado O."/>
            <person name="Dinh H.H."/>
            <person name="Draper H."/>
            <person name="Gonzalez-Garay M.L."/>
            <person name="Havlak P."/>
            <person name="Jackson L.R."/>
            <person name="Jacob L.S."/>
            <person name="Kelly S.H."/>
            <person name="Li L."/>
            <person name="Li Z."/>
            <person name="Liu J."/>
            <person name="Liu W."/>
            <person name="Lu J."/>
            <person name="Maheshwari M."/>
            <person name="Nguyen B.-V."/>
            <person name="Okwuonu G.O."/>
            <person name="Pasternak S."/>
            <person name="Perez L.M."/>
            <person name="Plopper F.J.H."/>
            <person name="Santibanez J."/>
            <person name="Shen H."/>
            <person name="Tabor P.E."/>
            <person name="Verduzco D."/>
            <person name="Waldron L."/>
            <person name="Wang Q."/>
            <person name="Williams G.A."/>
            <person name="Zhang J."/>
            <person name="Zhou J."/>
            <person name="Allen C.C."/>
            <person name="Amin A.G."/>
            <person name="Anyalebechi V."/>
            <person name="Bailey M."/>
            <person name="Barbaria J.A."/>
            <person name="Bimage K.E."/>
            <person name="Bryant N.P."/>
            <person name="Burch P.E."/>
            <person name="Burkett C.E."/>
            <person name="Burrell K.L."/>
            <person name="Calderon E."/>
            <person name="Cardenas V."/>
            <person name="Carter K."/>
            <person name="Casias K."/>
            <person name="Cavazos I."/>
            <person name="Cavazos S.R."/>
            <person name="Ceasar H."/>
            <person name="Chacko J."/>
            <person name="Chan S.N."/>
            <person name="Chavez D."/>
            <person name="Christopoulos C."/>
            <person name="Chu J."/>
            <person name="Cockrell R."/>
            <person name="Cox C.D."/>
            <person name="Dang M."/>
            <person name="Dathorne S.R."/>
            <person name="David R."/>
            <person name="Davis C.M."/>
            <person name="Davy-Carroll L."/>
            <person name="Deshazo D.R."/>
            <person name="Donlin J.E."/>
            <person name="D'Souza L."/>
            <person name="Eaves K.A."/>
            <person name="Egan A."/>
            <person name="Emery-Cohen A.J."/>
            <person name="Escotto M."/>
            <person name="Flagg N."/>
            <person name="Forbes L.D."/>
            <person name="Gabisi A.M."/>
            <person name="Garza M."/>
            <person name="Hamilton C."/>
            <person name="Henderson N."/>
            <person name="Hernandez O."/>
            <person name="Hines S."/>
            <person name="Hogues M.E."/>
            <person name="Huang M."/>
            <person name="Idlebird D.G."/>
            <person name="Johnson R."/>
            <person name="Jolivet A."/>
            <person name="Jones S."/>
            <person name="Kagan R."/>
            <person name="King L.M."/>
            <person name="Leal B."/>
            <person name="Lebow H."/>
            <person name="Lee S."/>
            <person name="LeVan J.M."/>
            <person name="Lewis L.C."/>
            <person name="London P."/>
            <person name="Lorensuhewa L.M."/>
            <person name="Loulseged H."/>
            <person name="Lovett D.A."/>
            <person name="Lucier A."/>
            <person name="Lucier R.L."/>
            <person name="Ma J."/>
            <person name="Madu R.C."/>
            <person name="Mapua P."/>
            <person name="Martindale A.D."/>
            <person name="Martinez E."/>
            <person name="Massey E."/>
            <person name="Mawhiney S."/>
            <person name="Meador M.G."/>
            <person name="Mendez S."/>
            <person name="Mercado C."/>
            <person name="Mercado I.C."/>
            <person name="Merritt C.E."/>
            <person name="Miner Z.L."/>
            <person name="Minja E."/>
            <person name="Mitchell T."/>
            <person name="Mohabbat F."/>
            <person name="Mohabbat K."/>
            <person name="Montgomery B."/>
            <person name="Moore N."/>
            <person name="Morris S."/>
            <person name="Munidasa M."/>
            <person name="Ngo R.N."/>
            <person name="Nguyen N.B."/>
            <person name="Nickerson E."/>
            <person name="Nwaokelemeh O.O."/>
            <person name="Nwokenkwo S."/>
            <person name="Obregon M."/>
            <person name="Oguh M."/>
            <person name="Oragunye N."/>
            <person name="Oviedo R.J."/>
            <person name="Parish B.J."/>
            <person name="Parker D.N."/>
            <person name="Parrish J."/>
            <person name="Parks K.L."/>
            <person name="Paul H.A."/>
            <person name="Payton B.A."/>
            <person name="Perez A."/>
            <person name="Perrin W."/>
            <person name="Pickens A."/>
            <person name="Primus E.L."/>
            <person name="Pu L.-L."/>
            <person name="Puazo M."/>
            <person name="Quiles M.M."/>
            <person name="Quiroz J.B."/>
            <person name="Rabata D."/>
            <person name="Reeves K."/>
            <person name="Ruiz S.J."/>
            <person name="Shao H."/>
            <person name="Sisson I."/>
            <person name="Sonaike T."/>
            <person name="Sorelle R.P."/>
            <person name="Sutton A.E."/>
            <person name="Svatek A.F."/>
            <person name="Svetz L.A."/>
            <person name="Tamerisa K.S."/>
            <person name="Taylor T.R."/>
            <person name="Teague B."/>
            <person name="Thomas N."/>
            <person name="Thorn R.D."/>
            <person name="Trejos Z.Y."/>
            <person name="Trevino B.K."/>
            <person name="Ukegbu O.N."/>
            <person name="Urban J.B."/>
            <person name="Vasquez L.I."/>
            <person name="Vera V.A."/>
            <person name="Villasana D.M."/>
            <person name="Wang L."/>
            <person name="Ward-Moore S."/>
            <person name="Warren J.T."/>
            <person name="Wei X."/>
            <person name="White F."/>
            <person name="Williamson A.L."/>
            <person name="Wleczyk R."/>
            <person name="Wooden H.S."/>
            <person name="Wooden S.H."/>
            <person name="Yen J."/>
            <person name="Yoon L."/>
            <person name="Yoon V."/>
            <person name="Zorrilla S.E."/>
            <person name="Nelson D."/>
            <person name="Kucherlapati R."/>
            <person name="Weinstock G."/>
            <person name="Gibbs R.A."/>
        </authorList>
    </citation>
    <scope>NUCLEOTIDE SEQUENCE [LARGE SCALE GENOMIC DNA]</scope>
</reference>
<reference key="3">
    <citation type="journal article" date="2004" name="Genome Res.">
        <title>The status, quality, and expansion of the NIH full-length cDNA project: the Mammalian Gene Collection (MGC).</title>
        <authorList>
            <consortium name="The MGC Project Team"/>
        </authorList>
    </citation>
    <scope>NUCLEOTIDE SEQUENCE [LARGE SCALE MRNA] (ISOFORM A)</scope>
</reference>
<reference key="4">
    <citation type="journal article" date="2008" name="Hum. Mol. Genet.">
        <title>Brain-specific tryptophan hydroxylase 2 (TPH2): a functional Pro206Ser substitution and variation in the 5'-region are associated with bipolar affective disorder.</title>
        <authorList>
            <person name="Cichon S."/>
            <person name="Winge I."/>
            <person name="Mattheisen M."/>
            <person name="Georgi A."/>
            <person name="Karpushova A."/>
            <person name="Freudenberg J."/>
            <person name="Freudenberg-Hua Y."/>
            <person name="Babadjanova G."/>
            <person name="Van Den Bogaert A."/>
            <person name="Abramova L.I."/>
            <person name="Kapiletti S."/>
            <person name="Knappskog P.M."/>
            <person name="McKinney J."/>
            <person name="Maier W."/>
            <person name="Jamra R.A."/>
            <person name="Schulze T.G."/>
            <person name="Schumacher J."/>
            <person name="Propping P."/>
            <person name="Rietschel M."/>
            <person name="Haavik J."/>
            <person name="Noethen M.M."/>
        </authorList>
    </citation>
    <scope>BIOPHYSICOCHEMICAL PROPERTIES</scope>
    <scope>VARIANT SER-206</scope>
    <scope>CHARACTERIZATION OF VARIANTS SER-206 AND HIS-441</scope>
</reference>
<reference key="5">
    <citation type="journal article" date="2010" name="PLoS ONE">
        <title>Alternative splicing and extensive RNA editing of human TPH2 transcripts.</title>
        <authorList>
            <person name="Grohmann M."/>
            <person name="Hammer P."/>
            <person name="Walther M."/>
            <person name="Paulmann N."/>
            <person name="Buttner A."/>
            <person name="Eisenmenger W."/>
            <person name="Baghai T.C."/>
            <person name="Schule C."/>
            <person name="Rupprecht R."/>
            <person name="Bader M."/>
            <person name="Bondy B."/>
            <person name="Zill P."/>
            <person name="Priller J."/>
            <person name="Walther D.J."/>
        </authorList>
    </citation>
    <scope>ALTERNATIVE SPLICING (ISOFORMS A AND B)</scope>
    <scope>RNA EDITING OF POSITIONS 433; 441 AND 468</scope>
    <source>
        <tissue>Brain</tissue>
    </source>
</reference>
<reference key="6">
    <citation type="journal article" date="2005" name="Neuron">
        <title>Loss-of-function mutation in tryptophan hydroxylase-2 identified in unipolar major depression.</title>
        <authorList>
            <person name="Zhang X."/>
            <person name="Gainetdinov R.R."/>
            <person name="Beaulieu J.-M."/>
            <person name="Sotnikova T.D."/>
            <person name="Burch L.H."/>
            <person name="Williams R.B."/>
            <person name="Schwartz D.A."/>
            <person name="Krishnan K.R.R."/>
            <person name="Caron M.G."/>
        </authorList>
    </citation>
    <scope>INVOLVEMENT IN MDD</scope>
    <scope>VARIANT HIS-441</scope>
    <scope>CHARACTERIZATION OF VARIANT HIS-441</scope>
</reference>
<reference key="7">
    <citation type="journal article" date="2008" name="Mol. Psychiatry">
        <title>A loss-of-function mutation in tryptophan hydroxylase 2 segregating with attention-deficit/hyperactivity disorder.</title>
        <authorList>
            <person name="McKinney J."/>
            <person name="Johansson S."/>
            <person name="Halmoy A."/>
            <person name="Dramsdahl M."/>
            <person name="Winge I."/>
            <person name="Knappskog P.M."/>
            <person name="Haavik J."/>
        </authorList>
    </citation>
    <scope>VARIANT ADHD7 TRP-303</scope>
</reference>
<reference key="8">
    <citation type="journal article" date="2009" name="Hum. Mutat.">
        <title>Functional properties of missense variants of human tryptophan hydroxylase 2.</title>
        <authorList>
            <person name="McKinney J.A."/>
            <person name="Turel B."/>
            <person name="Winge I."/>
            <person name="Knappskog P.M."/>
            <person name="Haavik J."/>
        </authorList>
    </citation>
    <scope>CHARACTERIZATION OF VARIANTS VAL-36; PRO-36; TYR-41; CYS-55; SER-206; TRP-303; VAL-328; HIS-441 AND GLU-479</scope>
</reference>
<reference key="9">
    <citation type="journal article" date="2023" name="Biochem. Biophys. Rep.">
        <title>The A328 V/E (rs2887147) polymorphisms in human tryptophan hydroxylase 2 compromise enzyme activity.</title>
        <authorList>
            <person name="Carkaci-Salli N."/>
            <person name="Bewley M.C."/>
            <person name="Tekin I."/>
            <person name="Flanagan J.M."/>
            <person name="Vrana K.E."/>
        </authorList>
    </citation>
    <scope>CHARACTERIZATION OF VARIANTS GLU-328 AND VAL-328</scope>
    <scope>CATALYTIC ACTIVITY</scope>
</reference>
<dbReference type="EC" id="1.14.16.4" evidence="11"/>
<dbReference type="EMBL" id="AY098914">
    <property type="protein sequence ID" value="AAM28946.1"/>
    <property type="molecule type" value="mRNA"/>
</dbReference>
<dbReference type="EMBL" id="AC090109">
    <property type="status" value="NOT_ANNOTATED_CDS"/>
    <property type="molecule type" value="Genomic_DNA"/>
</dbReference>
<dbReference type="EMBL" id="BC114499">
    <property type="protein sequence ID" value="AAI14500.1"/>
    <property type="molecule type" value="mRNA"/>
</dbReference>
<dbReference type="CCDS" id="CCDS31859.1">
    <molecule id="Q8IWU9-1"/>
</dbReference>
<dbReference type="RefSeq" id="NP_775489.2">
    <molecule id="Q8IWU9-1"/>
    <property type="nucleotide sequence ID" value="NM_173353.3"/>
</dbReference>
<dbReference type="PDB" id="4V06">
    <property type="method" value="X-ray"/>
    <property type="resolution" value="2.63 A"/>
    <property type="chains" value="A/B=148-490"/>
</dbReference>
<dbReference type="PDB" id="7QRI">
    <property type="method" value="NMR"/>
    <property type="chains" value="A/B=48-145"/>
</dbReference>
<dbReference type="PDB" id="7WIY">
    <property type="method" value="EM"/>
    <property type="resolution" value="3.09 A"/>
    <property type="chains" value="A/B/C/D=1-490"/>
</dbReference>
<dbReference type="PDBsum" id="4V06"/>
<dbReference type="PDBsum" id="7QRI"/>
<dbReference type="PDBsum" id="7WIY"/>
<dbReference type="EMDB" id="EMD-32540"/>
<dbReference type="SMR" id="Q8IWU9"/>
<dbReference type="BioGRID" id="125720">
    <property type="interactions" value="7"/>
</dbReference>
<dbReference type="FunCoup" id="Q8IWU9">
    <property type="interactions" value="328"/>
</dbReference>
<dbReference type="IntAct" id="Q8IWU9">
    <property type="interactions" value="4"/>
</dbReference>
<dbReference type="MINT" id="Q8IWU9"/>
<dbReference type="STRING" id="9606.ENSP00000329093"/>
<dbReference type="BindingDB" id="Q8IWU9"/>
<dbReference type="ChEMBL" id="CHEMBL5433"/>
<dbReference type="DrugBank" id="DB12095">
    <property type="generic name" value="Telotristat ethyl"/>
</dbReference>
<dbReference type="DrugBank" id="DB00150">
    <property type="generic name" value="Tryptophan"/>
</dbReference>
<dbReference type="GuidetoPHARMACOLOGY" id="1242"/>
<dbReference type="GlyGen" id="Q8IWU9">
    <property type="glycosylation" value="1 site, 1 O-linked glycan (1 site)"/>
</dbReference>
<dbReference type="iPTMnet" id="Q8IWU9"/>
<dbReference type="PhosphoSitePlus" id="Q8IWU9"/>
<dbReference type="BioMuta" id="TPH2"/>
<dbReference type="DMDM" id="30580625"/>
<dbReference type="jPOST" id="Q8IWU9"/>
<dbReference type="MassIVE" id="Q8IWU9"/>
<dbReference type="PaxDb" id="9606-ENSP00000329093"/>
<dbReference type="PeptideAtlas" id="Q8IWU9"/>
<dbReference type="ProteomicsDB" id="70900">
    <molecule id="Q8IWU9-1"/>
</dbReference>
<dbReference type="ProteomicsDB" id="70901">
    <molecule id="Q8IWU9-2"/>
</dbReference>
<dbReference type="Antibodypedia" id="17122">
    <property type="antibodies" value="554 antibodies from 36 providers"/>
</dbReference>
<dbReference type="DNASU" id="121278"/>
<dbReference type="Ensembl" id="ENST00000333850.4">
    <molecule id="Q8IWU9-1"/>
    <property type="protein sequence ID" value="ENSP00000329093.3"/>
    <property type="gene ID" value="ENSG00000139287.13"/>
</dbReference>
<dbReference type="GeneID" id="121278"/>
<dbReference type="KEGG" id="hsa:121278"/>
<dbReference type="MANE-Select" id="ENST00000333850.4">
    <property type="protein sequence ID" value="ENSP00000329093.3"/>
    <property type="RefSeq nucleotide sequence ID" value="NM_173353.4"/>
    <property type="RefSeq protein sequence ID" value="NP_775489.2"/>
</dbReference>
<dbReference type="UCSC" id="uc009zrw.1">
    <molecule id="Q8IWU9-1"/>
    <property type="organism name" value="human"/>
</dbReference>
<dbReference type="AGR" id="HGNC:20692"/>
<dbReference type="CTD" id="121278"/>
<dbReference type="DisGeNET" id="121278"/>
<dbReference type="GeneCards" id="TPH2"/>
<dbReference type="HGNC" id="HGNC:20692">
    <property type="gene designation" value="TPH2"/>
</dbReference>
<dbReference type="HPA" id="ENSG00000139287">
    <property type="expression patterns" value="Not detected"/>
</dbReference>
<dbReference type="MalaCards" id="TPH2"/>
<dbReference type="MIM" id="607478">
    <property type="type" value="gene"/>
</dbReference>
<dbReference type="MIM" id="608516">
    <property type="type" value="phenotype"/>
</dbReference>
<dbReference type="MIM" id="613003">
    <property type="type" value="phenotype"/>
</dbReference>
<dbReference type="neXtProt" id="NX_Q8IWU9"/>
<dbReference type="OpenTargets" id="ENSG00000139287"/>
<dbReference type="PharmGKB" id="PA128747823"/>
<dbReference type="VEuPathDB" id="HostDB:ENSG00000139287"/>
<dbReference type="eggNOG" id="KOG3820">
    <property type="taxonomic scope" value="Eukaryota"/>
</dbReference>
<dbReference type="GeneTree" id="ENSGT00950000182885"/>
<dbReference type="HOGENOM" id="CLU_023198_0_0_1"/>
<dbReference type="InParanoid" id="Q8IWU9"/>
<dbReference type="OMA" id="VHFNPYT"/>
<dbReference type="OrthoDB" id="983542at2759"/>
<dbReference type="PAN-GO" id="Q8IWU9">
    <property type="GO annotations" value="2 GO annotations based on evolutionary models"/>
</dbReference>
<dbReference type="PhylomeDB" id="Q8IWU9"/>
<dbReference type="TreeFam" id="TF313327"/>
<dbReference type="BioCyc" id="MetaCyc:HS06603-MONOMER"/>
<dbReference type="BRENDA" id="1.14.16.4">
    <property type="organism ID" value="2681"/>
</dbReference>
<dbReference type="PathwayCommons" id="Q8IWU9"/>
<dbReference type="Reactome" id="R-HSA-209931">
    <property type="pathway name" value="Serotonin and melatonin biosynthesis"/>
</dbReference>
<dbReference type="SABIO-RK" id="Q8IWU9"/>
<dbReference type="SignaLink" id="Q8IWU9"/>
<dbReference type="SIGNOR" id="Q8IWU9"/>
<dbReference type="UniPathway" id="UPA00846">
    <property type="reaction ID" value="UER00799"/>
</dbReference>
<dbReference type="BioGRID-ORCS" id="121278">
    <property type="hits" value="16 hits in 1139 CRISPR screens"/>
</dbReference>
<dbReference type="ChiTaRS" id="TPH2">
    <property type="organism name" value="human"/>
</dbReference>
<dbReference type="EvolutionaryTrace" id="Q8IWU9"/>
<dbReference type="GeneWiki" id="TPH2"/>
<dbReference type="GenomeRNAi" id="121278"/>
<dbReference type="Pharos" id="Q8IWU9">
    <property type="development level" value="Tchem"/>
</dbReference>
<dbReference type="PRO" id="PR:Q8IWU9"/>
<dbReference type="Proteomes" id="UP000005640">
    <property type="component" value="Chromosome 12"/>
</dbReference>
<dbReference type="RNAct" id="Q8IWU9">
    <property type="molecule type" value="protein"/>
</dbReference>
<dbReference type="Bgee" id="ENSG00000139287">
    <property type="expression patterns" value="Expressed in secondary oocyte and 72 other cell types or tissues"/>
</dbReference>
<dbReference type="GO" id="GO:0005829">
    <property type="term" value="C:cytosol"/>
    <property type="evidence" value="ECO:0000304"/>
    <property type="project" value="Reactome"/>
</dbReference>
<dbReference type="GO" id="GO:0043005">
    <property type="term" value="C:neuron projection"/>
    <property type="evidence" value="ECO:0000318"/>
    <property type="project" value="GO_Central"/>
</dbReference>
<dbReference type="GO" id="GO:0005506">
    <property type="term" value="F:iron ion binding"/>
    <property type="evidence" value="ECO:0007669"/>
    <property type="project" value="InterPro"/>
</dbReference>
<dbReference type="GO" id="GO:0004510">
    <property type="term" value="F:tryptophan 5-monooxygenase activity"/>
    <property type="evidence" value="ECO:0000314"/>
    <property type="project" value="UniProtKB"/>
</dbReference>
<dbReference type="GO" id="GO:0009072">
    <property type="term" value="P:aromatic amino acid metabolic process"/>
    <property type="evidence" value="ECO:0007669"/>
    <property type="project" value="InterPro"/>
</dbReference>
<dbReference type="GO" id="GO:0042427">
    <property type="term" value="P:serotonin biosynthetic process"/>
    <property type="evidence" value="ECO:0007669"/>
    <property type="project" value="UniProtKB-UniPathway"/>
</dbReference>
<dbReference type="CDD" id="cd03346">
    <property type="entry name" value="eu_TrpOH"/>
    <property type="match status" value="1"/>
</dbReference>
<dbReference type="FunFam" id="1.10.800.10:FF:000001">
    <property type="entry name" value="tryptophan 5-hydroxylase 1"/>
    <property type="match status" value="1"/>
</dbReference>
<dbReference type="Gene3D" id="1.10.800.10">
    <property type="entry name" value="Aromatic amino acid hydroxylase"/>
    <property type="match status" value="1"/>
</dbReference>
<dbReference type="InterPro" id="IPR045865">
    <property type="entry name" value="ACT-like_dom_sf"/>
</dbReference>
<dbReference type="InterPro" id="IPR002912">
    <property type="entry name" value="ACT_dom"/>
</dbReference>
<dbReference type="InterPro" id="IPR001273">
    <property type="entry name" value="ArAA_hydroxylase"/>
</dbReference>
<dbReference type="InterPro" id="IPR018301">
    <property type="entry name" value="ArAA_hydroxylase_Fe/CU_BS"/>
</dbReference>
<dbReference type="InterPro" id="IPR036951">
    <property type="entry name" value="ArAA_hydroxylase_sf"/>
</dbReference>
<dbReference type="InterPro" id="IPR036329">
    <property type="entry name" value="Aro-AA_hydroxylase_C_sf"/>
</dbReference>
<dbReference type="InterPro" id="IPR019774">
    <property type="entry name" value="Aromatic-AA_hydroxylase_C"/>
</dbReference>
<dbReference type="InterPro" id="IPR005963">
    <property type="entry name" value="Trp_5_mOase"/>
</dbReference>
<dbReference type="InterPro" id="IPR041904">
    <property type="entry name" value="TrpOH_cat"/>
</dbReference>
<dbReference type="InterPro" id="IPR019773">
    <property type="entry name" value="Tyrosine_3-monooxygenase-like"/>
</dbReference>
<dbReference type="NCBIfam" id="TIGR01270">
    <property type="entry name" value="Trp_5_monoox"/>
    <property type="match status" value="1"/>
</dbReference>
<dbReference type="PANTHER" id="PTHR11473">
    <property type="entry name" value="AROMATIC AMINO ACID HYDROXYLASE"/>
    <property type="match status" value="1"/>
</dbReference>
<dbReference type="PANTHER" id="PTHR11473:SF16">
    <property type="entry name" value="TRYPTOPHAN 5-HYDROXYLASE 2"/>
    <property type="match status" value="1"/>
</dbReference>
<dbReference type="Pfam" id="PF00351">
    <property type="entry name" value="Biopterin_H"/>
    <property type="match status" value="1"/>
</dbReference>
<dbReference type="PIRSF" id="PIRSF000336">
    <property type="entry name" value="TH"/>
    <property type="match status" value="1"/>
</dbReference>
<dbReference type="PRINTS" id="PR00372">
    <property type="entry name" value="FYWHYDRXLASE"/>
</dbReference>
<dbReference type="SUPFAM" id="SSF55021">
    <property type="entry name" value="ACT-like"/>
    <property type="match status" value="1"/>
</dbReference>
<dbReference type="SUPFAM" id="SSF56534">
    <property type="entry name" value="Aromatic aminoacid monoxygenases, catalytic and oligomerization domains"/>
    <property type="match status" value="1"/>
</dbReference>
<dbReference type="PROSITE" id="PS51671">
    <property type="entry name" value="ACT"/>
    <property type="match status" value="1"/>
</dbReference>
<dbReference type="PROSITE" id="PS00367">
    <property type="entry name" value="BH4_AAA_HYDROXYL_1"/>
    <property type="match status" value="1"/>
</dbReference>
<dbReference type="PROSITE" id="PS51410">
    <property type="entry name" value="BH4_AAA_HYDROXYL_2"/>
    <property type="match status" value="1"/>
</dbReference>
<proteinExistence type="evidence at protein level"/>
<gene>
    <name type="primary">TPH2</name>
    <name type="synonym">NTPH</name>
</gene>
<comment type="catalytic activity">
    <reaction evidence="11">
        <text>(6R)-L-erythro-5,6,7,8-tetrahydrobiopterin + L-tryptophan + O2 = 5-hydroxy-L-tryptophan + (4aS,6R)-4a-hydroxy-L-erythro-5,6,7,8-tetrahydrobiopterin</text>
        <dbReference type="Rhea" id="RHEA:16709"/>
        <dbReference type="ChEBI" id="CHEBI:15379"/>
        <dbReference type="ChEBI" id="CHEBI:15642"/>
        <dbReference type="ChEBI" id="CHEBI:57912"/>
        <dbReference type="ChEBI" id="CHEBI:58266"/>
        <dbReference type="ChEBI" id="CHEBI:59560"/>
        <dbReference type="EC" id="1.14.16.4"/>
    </reaction>
</comment>
<comment type="cofactor">
    <cofactor evidence="1">
        <name>Fe(2+)</name>
        <dbReference type="ChEBI" id="CHEBI:29033"/>
    </cofactor>
</comment>
<comment type="biophysicochemical properties">
    <kinetics>
        <KM evidence="7">41.3 uM for L-tryptophan</KM>
        <Vmax evidence="7">833.0 nmol/min/mg enzyme</Vmax>
    </kinetics>
</comment>
<comment type="pathway">
    <text>Aromatic compound metabolism; serotonin biosynthesis; serotonin from L-tryptophan: step 1/2.</text>
</comment>
<comment type="subunit">
    <text evidence="3">Interacts with DNAJC12.</text>
</comment>
<comment type="alternative products">
    <event type="alternative splicing"/>
    <isoform>
        <id>Q8IWU9-1</id>
        <name>a</name>
        <sequence type="displayed"/>
    </isoform>
    <isoform>
        <id>Q8IWU9-2</id>
        <name>b</name>
        <sequence type="described" ref="VSP_040971"/>
    </isoform>
</comment>
<comment type="tissue specificity">
    <text>Brain specific.</text>
</comment>
<comment type="RNA editing">
    <location>
        <position position="433" evidence="10"/>
    </location>
    <location>
        <position position="441" evidence="10"/>
    </location>
    <location>
        <position position="468" evidence="10"/>
    </location>
    <text>Modulates the kinetic properties of both isoforms.</text>
</comment>
<comment type="disease" evidence="6">
    <disease id="DI-00697">
        <name>Major depressive disorder</name>
        <acronym>MDD</acronym>
        <description>A common psychiatric disorder. It is a complex trait characterized by one or more major depressive episodes without a history of manic, mixed, or hypomanic episodes. A major depressive episode is characterized by at least 2 weeks during which there is a new onset or clear worsening of either depressed mood or loss of interest or pleasure in nearly all activities. Four additional symptoms must also be present including changes in appetite, weight, sleep, and psychomotor activity; decreased energy; feelings of worthlessness or guilt; difficulty thinking, concentrating, or making decisions; or recurrent thoughts of death or suicidal ideation, plans, or attempts. The episode must be accompanied by distress or impairment in social, occupational, or other important areas of functioning.</description>
        <dbReference type="MIM" id="608516"/>
    </disease>
    <text>Disease susceptibility is associated with variants affecting the gene represented in this entry.</text>
</comment>
<comment type="disease" evidence="8">
    <disease id="DI-02574">
        <name>Attention deficit-hyperactivity disorder 7</name>
        <acronym>ADHD7</acronym>
        <description>A neurobehavioral developmental disorder primarily characterized by the coexistence of attentional problems and hyperactivity, with each behavior occurring infrequently alone.</description>
        <dbReference type="MIM" id="613003"/>
    </disease>
    <text>Disease susceptibility is associated with variants affecting the gene represented in this entry. Naturally occurring variants of TPH2 with impaired enzyme activity could cause deficiency of serotonin production and result in an increased risk of developing behavioral disorders.</text>
</comment>
<comment type="similarity">
    <text evidence="12">Belongs to the biopterin-dependent aromatic amino acid hydroxylase family.</text>
</comment>
<sequence>MQPAMMMFSSKYWARRGFSLDSAVPEEHQLLGSSTLNKPNSGKNDDKGNKGSSKREAATESGKTAVVFSLKNEVGGLVKALRLFQEKRVNMVHIESRKSRRRSSEVEIFVDCECGKTEFNELIQLLKFQTTIVTLNPPENIWTEEEELEDVPWFPRKISELDKCSHRVLMYGSELDADHPGFKDNVYRQRRKYFVDVAMGYKYGQPIPRVEYTEEETKTWGVVFRELSKLYPTHACREYLKNFPLLTKYCGYREDNVPQLEDVSMFLKERSGFTVRPVAGYLSPRDFLAGLAYRVFHCTQYIRHGSDPLYTPEPDTCHELLGHVPLLADPKFAQFSQEIGLASLGASDEDVQKLATCYFFTIEFGLCKQEGQLRAYGAGLLSSIGELKHALSDKACVKAFDPKTTCLQECLITTFQEAYFVSESFEEAKEKMRDFAKSITRPFSVYFNPYTQSIEILKDTRSIENVVQDLRSDLNTVCDALNKMNQYLGI</sequence>
<keyword id="KW-0002">3D-structure</keyword>
<keyword id="KW-0025">Alternative splicing</keyword>
<keyword id="KW-0225">Disease variant</keyword>
<keyword id="KW-0408">Iron</keyword>
<keyword id="KW-0479">Metal-binding</keyword>
<keyword id="KW-0503">Monooxygenase</keyword>
<keyword id="KW-0560">Oxidoreductase</keyword>
<keyword id="KW-0597">Phosphoprotein</keyword>
<keyword id="KW-1267">Proteomics identification</keyword>
<keyword id="KW-1185">Reference proteome</keyword>
<keyword id="KW-0691">RNA editing</keyword>
<keyword id="KW-0724">Serotonin biosynthesis</keyword>